<reference key="1">
    <citation type="submission" date="2009-03" db="EMBL/GenBank/DDBJ databases">
        <title>Comparison of the complete genome sequences of Rhodococcus erythropolis PR4 and Rhodococcus opacus B4.</title>
        <authorList>
            <person name="Takarada H."/>
            <person name="Sekine M."/>
            <person name="Hosoyama A."/>
            <person name="Yamada R."/>
            <person name="Fujisawa T."/>
            <person name="Omata S."/>
            <person name="Shimizu A."/>
            <person name="Tsukatani N."/>
            <person name="Tanikawa S."/>
            <person name="Fujita N."/>
            <person name="Harayama S."/>
        </authorList>
    </citation>
    <scope>NUCLEOTIDE SEQUENCE [LARGE SCALE GENOMIC DNA]</scope>
    <source>
        <strain>B4</strain>
    </source>
</reference>
<comment type="function">
    <text evidence="1">Binds to DNA and alters its conformation. May be involved in regulation of gene expression, nucleoid organization and DNA protection.</text>
</comment>
<comment type="subunit">
    <text evidence="1">Homodimer.</text>
</comment>
<comment type="subcellular location">
    <subcellularLocation>
        <location evidence="1">Cytoplasm</location>
        <location evidence="1">Nucleoid</location>
    </subcellularLocation>
</comment>
<comment type="similarity">
    <text evidence="1">Belongs to the YbaB/EbfC family.</text>
</comment>
<sequence length="113" mass="11356">MQPGGQPDMSQLLAQAQQMQQQLMAAQQEMAEAEVTGQAGGGLVTATVKGTGEVVGLKIDPKVVDPDDVETLQDLVIGAIEDASSKAQEIAAQKLGPLAGGFGGGGLPGLPGF</sequence>
<gene>
    <name type="ordered locus">ROP_41370</name>
</gene>
<organism>
    <name type="scientific">Rhodococcus opacus (strain B4)</name>
    <dbReference type="NCBI Taxonomy" id="632772"/>
    <lineage>
        <taxon>Bacteria</taxon>
        <taxon>Bacillati</taxon>
        <taxon>Actinomycetota</taxon>
        <taxon>Actinomycetes</taxon>
        <taxon>Mycobacteriales</taxon>
        <taxon>Nocardiaceae</taxon>
        <taxon>Rhodococcus</taxon>
    </lineage>
</organism>
<accession>C1B9N1</accession>
<evidence type="ECO:0000255" key="1">
    <source>
        <dbReference type="HAMAP-Rule" id="MF_00274"/>
    </source>
</evidence>
<dbReference type="EMBL" id="AP011115">
    <property type="protein sequence ID" value="BAH52384.1"/>
    <property type="molecule type" value="Genomic_DNA"/>
</dbReference>
<dbReference type="SMR" id="C1B9N1"/>
<dbReference type="STRING" id="632772.ROP_41370"/>
<dbReference type="KEGG" id="rop:ROP_41370"/>
<dbReference type="PATRIC" id="fig|632772.20.peg.4336"/>
<dbReference type="HOGENOM" id="CLU_140930_4_0_11"/>
<dbReference type="Proteomes" id="UP000002212">
    <property type="component" value="Chromosome"/>
</dbReference>
<dbReference type="GO" id="GO:0043590">
    <property type="term" value="C:bacterial nucleoid"/>
    <property type="evidence" value="ECO:0007669"/>
    <property type="project" value="UniProtKB-UniRule"/>
</dbReference>
<dbReference type="GO" id="GO:0005829">
    <property type="term" value="C:cytosol"/>
    <property type="evidence" value="ECO:0007669"/>
    <property type="project" value="TreeGrafter"/>
</dbReference>
<dbReference type="GO" id="GO:0003677">
    <property type="term" value="F:DNA binding"/>
    <property type="evidence" value="ECO:0007669"/>
    <property type="project" value="UniProtKB-UniRule"/>
</dbReference>
<dbReference type="FunFam" id="3.30.1310.10:FF:000003">
    <property type="entry name" value="Nucleoid-associated protein MRA_3753"/>
    <property type="match status" value="1"/>
</dbReference>
<dbReference type="Gene3D" id="3.30.1310.10">
    <property type="entry name" value="Nucleoid-associated protein YbaB-like domain"/>
    <property type="match status" value="1"/>
</dbReference>
<dbReference type="HAMAP" id="MF_00274">
    <property type="entry name" value="DNA_YbaB_EbfC"/>
    <property type="match status" value="1"/>
</dbReference>
<dbReference type="InterPro" id="IPR036894">
    <property type="entry name" value="YbaB-like_sf"/>
</dbReference>
<dbReference type="InterPro" id="IPR004401">
    <property type="entry name" value="YbaB/EbfC"/>
</dbReference>
<dbReference type="NCBIfam" id="TIGR00103">
    <property type="entry name" value="DNA_YbaB_EbfC"/>
    <property type="match status" value="1"/>
</dbReference>
<dbReference type="PANTHER" id="PTHR33449">
    <property type="entry name" value="NUCLEOID-ASSOCIATED PROTEIN YBAB"/>
    <property type="match status" value="1"/>
</dbReference>
<dbReference type="PANTHER" id="PTHR33449:SF1">
    <property type="entry name" value="NUCLEOID-ASSOCIATED PROTEIN YBAB"/>
    <property type="match status" value="1"/>
</dbReference>
<dbReference type="Pfam" id="PF02575">
    <property type="entry name" value="YbaB_DNA_bd"/>
    <property type="match status" value="1"/>
</dbReference>
<dbReference type="PIRSF" id="PIRSF004555">
    <property type="entry name" value="UCP004555"/>
    <property type="match status" value="1"/>
</dbReference>
<dbReference type="SUPFAM" id="SSF82607">
    <property type="entry name" value="YbaB-like"/>
    <property type="match status" value="1"/>
</dbReference>
<name>Y4137_RHOOB</name>
<protein>
    <recommendedName>
        <fullName evidence="1">Nucleoid-associated protein ROP_41370</fullName>
    </recommendedName>
</protein>
<proteinExistence type="inferred from homology"/>
<keyword id="KW-0963">Cytoplasm</keyword>
<keyword id="KW-0238">DNA-binding</keyword>
<feature type="chain" id="PRO_1000197672" description="Nucleoid-associated protein ROP_41370">
    <location>
        <begin position="1"/>
        <end position="113"/>
    </location>
</feature>